<feature type="chain" id="PRO_0000360105" description="Tryptophan 2,3-dioxygenase">
    <location>
        <begin position="1"/>
        <end position="306"/>
    </location>
</feature>
<feature type="region of interest" description="Disordered" evidence="2">
    <location>
        <begin position="1"/>
        <end position="29"/>
    </location>
</feature>
<feature type="binding site" evidence="1">
    <location>
        <begin position="75"/>
        <end position="79"/>
    </location>
    <ligand>
        <name>substrate</name>
    </ligand>
</feature>
<feature type="binding site" evidence="1">
    <location>
        <position position="137"/>
    </location>
    <ligand>
        <name>substrate</name>
    </ligand>
</feature>
<feature type="binding site" evidence="1">
    <location>
        <position position="141"/>
    </location>
    <ligand>
        <name>substrate</name>
    </ligand>
</feature>
<feature type="binding site" description="axial binding residue" evidence="1">
    <location>
        <position position="264"/>
    </location>
    <ligand>
        <name>heme</name>
        <dbReference type="ChEBI" id="CHEBI:30413"/>
    </ligand>
    <ligandPart>
        <name>Fe</name>
        <dbReference type="ChEBI" id="CHEBI:18248"/>
    </ligandPart>
</feature>
<feature type="binding site" evidence="1">
    <location>
        <position position="278"/>
    </location>
    <ligand>
        <name>substrate</name>
    </ligand>
</feature>
<dbReference type="EC" id="1.13.11.11" evidence="1"/>
<dbReference type="EMBL" id="CP000010">
    <property type="protein sequence ID" value="AAU49146.1"/>
    <property type="status" value="ALT_INIT"/>
    <property type="molecule type" value="Genomic_DNA"/>
</dbReference>
<dbReference type="RefSeq" id="WP_004189970.1">
    <property type="nucleotide sequence ID" value="NC_006348.1"/>
</dbReference>
<dbReference type="RefSeq" id="YP_102169.1">
    <property type="nucleotide sequence ID" value="NC_006348.1"/>
</dbReference>
<dbReference type="SMR" id="Q62M99"/>
<dbReference type="GeneID" id="92978121"/>
<dbReference type="KEGG" id="bma:BMA0351"/>
<dbReference type="PATRIC" id="fig|243160.12.peg.352"/>
<dbReference type="eggNOG" id="COG3483">
    <property type="taxonomic scope" value="Bacteria"/>
</dbReference>
<dbReference type="HOGENOM" id="CLU_063240_0_0_4"/>
<dbReference type="UniPathway" id="UPA00333">
    <property type="reaction ID" value="UER00453"/>
</dbReference>
<dbReference type="Proteomes" id="UP000006693">
    <property type="component" value="Chromosome 1"/>
</dbReference>
<dbReference type="GO" id="GO:0020037">
    <property type="term" value="F:heme binding"/>
    <property type="evidence" value="ECO:0000250"/>
    <property type="project" value="UniProtKB"/>
</dbReference>
<dbReference type="GO" id="GO:0046872">
    <property type="term" value="F:metal ion binding"/>
    <property type="evidence" value="ECO:0007669"/>
    <property type="project" value="UniProtKB-KW"/>
</dbReference>
<dbReference type="GO" id="GO:0004833">
    <property type="term" value="F:tryptophan 2,3-dioxygenase activity"/>
    <property type="evidence" value="ECO:0000250"/>
    <property type="project" value="UniProtKB"/>
</dbReference>
<dbReference type="GO" id="GO:0019442">
    <property type="term" value="P:L-tryptophan catabolic process to acetyl-CoA"/>
    <property type="evidence" value="ECO:0007669"/>
    <property type="project" value="TreeGrafter"/>
</dbReference>
<dbReference type="GO" id="GO:0019441">
    <property type="term" value="P:L-tryptophan catabolic process to kynurenine"/>
    <property type="evidence" value="ECO:0000250"/>
    <property type="project" value="UniProtKB"/>
</dbReference>
<dbReference type="FunFam" id="1.20.58.480:FF:000001">
    <property type="entry name" value="Tryptophan 2,3-dioxygenase"/>
    <property type="match status" value="1"/>
</dbReference>
<dbReference type="Gene3D" id="1.20.58.480">
    <property type="match status" value="1"/>
</dbReference>
<dbReference type="HAMAP" id="MF_01972">
    <property type="entry name" value="T23O"/>
    <property type="match status" value="1"/>
</dbReference>
<dbReference type="InterPro" id="IPR037217">
    <property type="entry name" value="Trp/Indoleamine_2_3_dOase-like"/>
</dbReference>
<dbReference type="InterPro" id="IPR017485">
    <property type="entry name" value="Trp_2-3-dOase_bac"/>
</dbReference>
<dbReference type="InterPro" id="IPR004981">
    <property type="entry name" value="Trp_2_3_dOase"/>
</dbReference>
<dbReference type="NCBIfam" id="TIGR03036">
    <property type="entry name" value="trp_2_3_diox"/>
    <property type="match status" value="1"/>
</dbReference>
<dbReference type="PANTHER" id="PTHR10138">
    <property type="entry name" value="TRYPTOPHAN 2,3-DIOXYGENASE"/>
    <property type="match status" value="1"/>
</dbReference>
<dbReference type="PANTHER" id="PTHR10138:SF0">
    <property type="entry name" value="TRYPTOPHAN 2,3-DIOXYGENASE"/>
    <property type="match status" value="1"/>
</dbReference>
<dbReference type="Pfam" id="PF03301">
    <property type="entry name" value="Trp_dioxygenase"/>
    <property type="match status" value="1"/>
</dbReference>
<dbReference type="SUPFAM" id="SSF140959">
    <property type="entry name" value="Indolic compounds 2,3-dioxygenase-like"/>
    <property type="match status" value="1"/>
</dbReference>
<reference key="1">
    <citation type="journal article" date="2004" name="Proc. Natl. Acad. Sci. U.S.A.">
        <title>Structural flexibility in the Burkholderia mallei genome.</title>
        <authorList>
            <person name="Nierman W.C."/>
            <person name="DeShazer D."/>
            <person name="Kim H.S."/>
            <person name="Tettelin H."/>
            <person name="Nelson K.E."/>
            <person name="Feldblyum T.V."/>
            <person name="Ulrich R.L."/>
            <person name="Ronning C.M."/>
            <person name="Brinkac L.M."/>
            <person name="Daugherty S.C."/>
            <person name="Davidsen T.D."/>
            <person name="DeBoy R.T."/>
            <person name="Dimitrov G."/>
            <person name="Dodson R.J."/>
            <person name="Durkin A.S."/>
            <person name="Gwinn M.L."/>
            <person name="Haft D.H."/>
            <person name="Khouri H.M."/>
            <person name="Kolonay J.F."/>
            <person name="Madupu R."/>
            <person name="Mohammoud Y."/>
            <person name="Nelson W.C."/>
            <person name="Radune D."/>
            <person name="Romero C.M."/>
            <person name="Sarria S."/>
            <person name="Selengut J."/>
            <person name="Shamblin C."/>
            <person name="Sullivan S.A."/>
            <person name="White O."/>
            <person name="Yu Y."/>
            <person name="Zafar N."/>
            <person name="Zhou L."/>
            <person name="Fraser C.M."/>
        </authorList>
    </citation>
    <scope>NUCLEOTIDE SEQUENCE [LARGE SCALE GENOMIC DNA]</scope>
    <source>
        <strain>ATCC 23344</strain>
    </source>
</reference>
<organism>
    <name type="scientific">Burkholderia mallei (strain ATCC 23344)</name>
    <dbReference type="NCBI Taxonomy" id="243160"/>
    <lineage>
        <taxon>Bacteria</taxon>
        <taxon>Pseudomonadati</taxon>
        <taxon>Pseudomonadota</taxon>
        <taxon>Betaproteobacteria</taxon>
        <taxon>Burkholderiales</taxon>
        <taxon>Burkholderiaceae</taxon>
        <taxon>Burkholderia</taxon>
        <taxon>pseudomallei group</taxon>
    </lineage>
</organism>
<comment type="function">
    <text evidence="1">Heme-dependent dioxygenase that catalyzes the oxidative cleavage of the L-tryptophan (L-Trp) pyrrole ring and converts L-tryptophan to N-formyl-L-kynurenine. Catalyzes the oxidative cleavage of the indole moiety.</text>
</comment>
<comment type="catalytic activity">
    <reaction evidence="1">
        <text>L-tryptophan + O2 = N-formyl-L-kynurenine</text>
        <dbReference type="Rhea" id="RHEA:24536"/>
        <dbReference type="ChEBI" id="CHEBI:15379"/>
        <dbReference type="ChEBI" id="CHEBI:57912"/>
        <dbReference type="ChEBI" id="CHEBI:58629"/>
        <dbReference type="EC" id="1.13.11.11"/>
    </reaction>
</comment>
<comment type="cofactor">
    <cofactor evidence="1">
        <name>heme</name>
        <dbReference type="ChEBI" id="CHEBI:30413"/>
    </cofactor>
    <text evidence="1">Binds 1 heme group per subunit.</text>
</comment>
<comment type="pathway">
    <text evidence="1">Amino-acid degradation; L-tryptophan degradation via kynurenine pathway; L-kynurenine from L-tryptophan: step 1/2.</text>
</comment>
<comment type="subunit">
    <text evidence="1">Homotetramer.</text>
</comment>
<comment type="similarity">
    <text evidence="1">Belongs to the tryptophan 2,3-dioxygenase family.</text>
</comment>
<comment type="sequence caution" evidence="3">
    <conflict type="erroneous initiation">
        <sequence resource="EMBL-CDS" id="AAU49146"/>
    </conflict>
</comment>
<accession>Q62M99</accession>
<protein>
    <recommendedName>
        <fullName evidence="1">Tryptophan 2,3-dioxygenase</fullName>
        <shortName evidence="1">TDO</shortName>
        <ecNumber evidence="1">1.13.11.11</ecNumber>
    </recommendedName>
    <alternativeName>
        <fullName evidence="1">Tryptamin 2,3-dioxygenase</fullName>
    </alternativeName>
    <alternativeName>
        <fullName evidence="1">Tryptophan oxygenase</fullName>
        <shortName evidence="1">TO</shortName>
        <shortName evidence="1">TRPO</shortName>
    </alternativeName>
    <alternativeName>
        <fullName evidence="1">Tryptophan pyrrolase</fullName>
    </alternativeName>
    <alternativeName>
        <fullName evidence="1">Tryptophanase</fullName>
    </alternativeName>
</protein>
<proteinExistence type="inferred from homology"/>
<name>T23O_BURMA</name>
<keyword id="KW-0223">Dioxygenase</keyword>
<keyword id="KW-0349">Heme</keyword>
<keyword id="KW-0408">Iron</keyword>
<keyword id="KW-0479">Metal-binding</keyword>
<keyword id="KW-0560">Oxidoreductase</keyword>
<keyword id="KW-1185">Reference proteome</keyword>
<keyword id="KW-0823">Tryptophan catabolism</keyword>
<evidence type="ECO:0000255" key="1">
    <source>
        <dbReference type="HAMAP-Rule" id="MF_01972"/>
    </source>
</evidence>
<evidence type="ECO:0000256" key="2">
    <source>
        <dbReference type="SAM" id="MobiDB-lite"/>
    </source>
</evidence>
<evidence type="ECO:0000305" key="3"/>
<sequence length="306" mass="34902">MQPPGDDAAPRCPFAGAHAPDAPHVPEAAGDDVQAGWHRAQLDFSQSMSYGDYLSLDPILDAQHPRSPDHNEMLFIIQHQTSELWMKLALYELRAALASIRDDALPPAFKMLARVSRVLEQLVQAWNVLATMTPSEYSAMRPYLGASSGFQSYQYRELEFILGNKNAQMLRPHAHRPAIHAHLEASLQAPSLYDEVIRLLARRGFPIAPERLDADWTQPTRHDRTVETAWLAVYREPNAHWELYEMAEELVDLEDAFRQWRFRHVTTVERIIGFKQGTGSTSGAPYLRKMLDVVLFPELWHVRTTL</sequence>
<gene>
    <name evidence="1" type="primary">kynA</name>
    <name type="ordered locus">BMA0351</name>
</gene>